<sequence>MKVAVLGAAGGIGQALALLLKTQLPAGSKLSLYDIAPVIPGVAVDLSHIPTAVEVKGFAGEDPTAALEGADVVLISAGVARKPGMDRSDLFNINAGIVRNLVEKCAATCPKALIGIITNPVNTTVAIAAEVLKKAGVYDKNRLFGVTTLDVIRSETFVAEAKDLNVADVKVPVIGGHSGVTILPLLSQVEGVSFTDAEIAALTTRIQNAGTEVVEAKAGGGSATLSMGQAACRFGLSLVRGLQGEANVVECAYVDGGSEHTEFFAQPVVLGKNGIEQVLAYGEVSAFEANARDAMLDTLKADIQLGIEFVK</sequence>
<accession>B0TUH8</accession>
<proteinExistence type="inferred from homology"/>
<dbReference type="EC" id="1.1.1.37" evidence="1"/>
<dbReference type="EMBL" id="CP000931">
    <property type="protein sequence ID" value="ABZ75478.1"/>
    <property type="molecule type" value="Genomic_DNA"/>
</dbReference>
<dbReference type="RefSeq" id="WP_012276030.1">
    <property type="nucleotide sequence ID" value="NC_010334.1"/>
</dbReference>
<dbReference type="SMR" id="B0TUH8"/>
<dbReference type="STRING" id="458817.Shal_0903"/>
<dbReference type="KEGG" id="shl:Shal_0903"/>
<dbReference type="eggNOG" id="COG0039">
    <property type="taxonomic scope" value="Bacteria"/>
</dbReference>
<dbReference type="HOGENOM" id="CLU_047181_0_1_6"/>
<dbReference type="OrthoDB" id="9802969at2"/>
<dbReference type="Proteomes" id="UP000001317">
    <property type="component" value="Chromosome"/>
</dbReference>
<dbReference type="GO" id="GO:0005737">
    <property type="term" value="C:cytoplasm"/>
    <property type="evidence" value="ECO:0007669"/>
    <property type="project" value="TreeGrafter"/>
</dbReference>
<dbReference type="GO" id="GO:0030060">
    <property type="term" value="F:L-malate dehydrogenase (NAD+) activity"/>
    <property type="evidence" value="ECO:0007669"/>
    <property type="project" value="UniProtKB-UniRule"/>
</dbReference>
<dbReference type="GO" id="GO:0006108">
    <property type="term" value="P:malate metabolic process"/>
    <property type="evidence" value="ECO:0007669"/>
    <property type="project" value="InterPro"/>
</dbReference>
<dbReference type="GO" id="GO:0006099">
    <property type="term" value="P:tricarboxylic acid cycle"/>
    <property type="evidence" value="ECO:0007669"/>
    <property type="project" value="UniProtKB-UniRule"/>
</dbReference>
<dbReference type="CDD" id="cd01337">
    <property type="entry name" value="MDH_glyoxysomal_mitochondrial"/>
    <property type="match status" value="1"/>
</dbReference>
<dbReference type="FunFam" id="3.40.50.720:FF:000017">
    <property type="entry name" value="Malate dehydrogenase"/>
    <property type="match status" value="1"/>
</dbReference>
<dbReference type="FunFam" id="3.90.110.10:FF:000001">
    <property type="entry name" value="Malate dehydrogenase"/>
    <property type="match status" value="1"/>
</dbReference>
<dbReference type="Gene3D" id="3.90.110.10">
    <property type="entry name" value="Lactate dehydrogenase/glycoside hydrolase, family 4, C-terminal"/>
    <property type="match status" value="1"/>
</dbReference>
<dbReference type="Gene3D" id="3.40.50.720">
    <property type="entry name" value="NAD(P)-binding Rossmann-like Domain"/>
    <property type="match status" value="1"/>
</dbReference>
<dbReference type="HAMAP" id="MF_01516">
    <property type="entry name" value="Malate_dehydrog_1"/>
    <property type="match status" value="1"/>
</dbReference>
<dbReference type="InterPro" id="IPR001557">
    <property type="entry name" value="L-lactate/malate_DH"/>
</dbReference>
<dbReference type="InterPro" id="IPR022383">
    <property type="entry name" value="Lactate/malate_DH_C"/>
</dbReference>
<dbReference type="InterPro" id="IPR001236">
    <property type="entry name" value="Lactate/malate_DH_N"/>
</dbReference>
<dbReference type="InterPro" id="IPR015955">
    <property type="entry name" value="Lactate_DH/Glyco_Ohase_4_C"/>
</dbReference>
<dbReference type="InterPro" id="IPR001252">
    <property type="entry name" value="Malate_DH_AS"/>
</dbReference>
<dbReference type="InterPro" id="IPR010097">
    <property type="entry name" value="Malate_DH_type1"/>
</dbReference>
<dbReference type="InterPro" id="IPR023958">
    <property type="entry name" value="Malate_DH_type1_bac"/>
</dbReference>
<dbReference type="InterPro" id="IPR036291">
    <property type="entry name" value="NAD(P)-bd_dom_sf"/>
</dbReference>
<dbReference type="NCBIfam" id="TIGR01772">
    <property type="entry name" value="MDH_euk_gproteo"/>
    <property type="match status" value="1"/>
</dbReference>
<dbReference type="PANTHER" id="PTHR11540">
    <property type="entry name" value="MALATE AND LACTATE DEHYDROGENASE"/>
    <property type="match status" value="1"/>
</dbReference>
<dbReference type="PANTHER" id="PTHR11540:SF16">
    <property type="entry name" value="MALATE DEHYDROGENASE, MITOCHONDRIAL"/>
    <property type="match status" value="1"/>
</dbReference>
<dbReference type="Pfam" id="PF02866">
    <property type="entry name" value="Ldh_1_C"/>
    <property type="match status" value="1"/>
</dbReference>
<dbReference type="Pfam" id="PF00056">
    <property type="entry name" value="Ldh_1_N"/>
    <property type="match status" value="1"/>
</dbReference>
<dbReference type="PIRSF" id="PIRSF000102">
    <property type="entry name" value="Lac_mal_DH"/>
    <property type="match status" value="1"/>
</dbReference>
<dbReference type="SUPFAM" id="SSF56327">
    <property type="entry name" value="LDH C-terminal domain-like"/>
    <property type="match status" value="1"/>
</dbReference>
<dbReference type="SUPFAM" id="SSF51735">
    <property type="entry name" value="NAD(P)-binding Rossmann-fold domains"/>
    <property type="match status" value="1"/>
</dbReference>
<dbReference type="PROSITE" id="PS00068">
    <property type="entry name" value="MDH"/>
    <property type="match status" value="1"/>
</dbReference>
<organism>
    <name type="scientific">Shewanella halifaxensis (strain HAW-EB4)</name>
    <dbReference type="NCBI Taxonomy" id="458817"/>
    <lineage>
        <taxon>Bacteria</taxon>
        <taxon>Pseudomonadati</taxon>
        <taxon>Pseudomonadota</taxon>
        <taxon>Gammaproteobacteria</taxon>
        <taxon>Alteromonadales</taxon>
        <taxon>Shewanellaceae</taxon>
        <taxon>Shewanella</taxon>
    </lineage>
</organism>
<keyword id="KW-0520">NAD</keyword>
<keyword id="KW-0560">Oxidoreductase</keyword>
<keyword id="KW-0816">Tricarboxylic acid cycle</keyword>
<gene>
    <name evidence="1" type="primary">mdh</name>
    <name type="ordered locus">Shal_0903</name>
</gene>
<evidence type="ECO:0000255" key="1">
    <source>
        <dbReference type="HAMAP-Rule" id="MF_01516"/>
    </source>
</evidence>
<name>MDH_SHEHH</name>
<reference key="1">
    <citation type="submission" date="2008-01" db="EMBL/GenBank/DDBJ databases">
        <title>Complete sequence of Shewanella halifaxensis HAW-EB4.</title>
        <authorList>
            <consortium name="US DOE Joint Genome Institute"/>
            <person name="Copeland A."/>
            <person name="Lucas S."/>
            <person name="Lapidus A."/>
            <person name="Glavina del Rio T."/>
            <person name="Dalin E."/>
            <person name="Tice H."/>
            <person name="Bruce D."/>
            <person name="Goodwin L."/>
            <person name="Pitluck S."/>
            <person name="Sims D."/>
            <person name="Brettin T."/>
            <person name="Detter J.C."/>
            <person name="Han C."/>
            <person name="Kuske C.R."/>
            <person name="Schmutz J."/>
            <person name="Larimer F."/>
            <person name="Land M."/>
            <person name="Hauser L."/>
            <person name="Kyrpides N."/>
            <person name="Kim E."/>
            <person name="Zhao J.-S."/>
            <person name="Richardson P."/>
        </authorList>
    </citation>
    <scope>NUCLEOTIDE SEQUENCE [LARGE SCALE GENOMIC DNA]</scope>
    <source>
        <strain>HAW-EB4</strain>
    </source>
</reference>
<comment type="function">
    <text evidence="1">Catalyzes the reversible oxidation of malate to oxaloacetate.</text>
</comment>
<comment type="catalytic activity">
    <reaction evidence="1">
        <text>(S)-malate + NAD(+) = oxaloacetate + NADH + H(+)</text>
        <dbReference type="Rhea" id="RHEA:21432"/>
        <dbReference type="ChEBI" id="CHEBI:15378"/>
        <dbReference type="ChEBI" id="CHEBI:15589"/>
        <dbReference type="ChEBI" id="CHEBI:16452"/>
        <dbReference type="ChEBI" id="CHEBI:57540"/>
        <dbReference type="ChEBI" id="CHEBI:57945"/>
        <dbReference type="EC" id="1.1.1.37"/>
    </reaction>
</comment>
<comment type="subunit">
    <text evidence="1">Homodimer.</text>
</comment>
<comment type="similarity">
    <text evidence="1">Belongs to the LDH/MDH superfamily. MDH type 1 family.</text>
</comment>
<protein>
    <recommendedName>
        <fullName evidence="1">Malate dehydrogenase</fullName>
        <ecNumber evidence="1">1.1.1.37</ecNumber>
    </recommendedName>
</protein>
<feature type="chain" id="PRO_1000087539" description="Malate dehydrogenase">
    <location>
        <begin position="1"/>
        <end position="311"/>
    </location>
</feature>
<feature type="active site" description="Proton acceptor" evidence="1">
    <location>
        <position position="177"/>
    </location>
</feature>
<feature type="binding site" evidence="1">
    <location>
        <begin position="7"/>
        <end position="13"/>
    </location>
    <ligand>
        <name>NAD(+)</name>
        <dbReference type="ChEBI" id="CHEBI:57540"/>
    </ligand>
</feature>
<feature type="binding site" evidence="1">
    <location>
        <position position="34"/>
    </location>
    <ligand>
        <name>NAD(+)</name>
        <dbReference type="ChEBI" id="CHEBI:57540"/>
    </ligand>
</feature>
<feature type="binding site" evidence="1">
    <location>
        <position position="81"/>
    </location>
    <ligand>
        <name>substrate</name>
    </ligand>
</feature>
<feature type="binding site" evidence="1">
    <location>
        <position position="87"/>
    </location>
    <ligand>
        <name>substrate</name>
    </ligand>
</feature>
<feature type="binding site" evidence="1">
    <location>
        <position position="94"/>
    </location>
    <ligand>
        <name>NAD(+)</name>
        <dbReference type="ChEBI" id="CHEBI:57540"/>
    </ligand>
</feature>
<feature type="binding site" evidence="1">
    <location>
        <begin position="117"/>
        <end position="119"/>
    </location>
    <ligand>
        <name>NAD(+)</name>
        <dbReference type="ChEBI" id="CHEBI:57540"/>
    </ligand>
</feature>
<feature type="binding site" evidence="1">
    <location>
        <position position="119"/>
    </location>
    <ligand>
        <name>substrate</name>
    </ligand>
</feature>
<feature type="binding site" evidence="1">
    <location>
        <position position="153"/>
    </location>
    <ligand>
        <name>substrate</name>
    </ligand>
</feature>
<feature type="binding site" evidence="1">
    <location>
        <position position="227"/>
    </location>
    <ligand>
        <name>NAD(+)</name>
        <dbReference type="ChEBI" id="CHEBI:57540"/>
    </ligand>
</feature>